<comment type="function">
    <text evidence="1">F(1)F(0) ATP synthase produces ATP from ADP in the presence of a proton or sodium gradient. F-type ATPases consist of two structural domains, F(1) containing the extramembraneous catalytic core and F(0) containing the membrane proton channel, linked together by a central stalk and a peripheral stalk. During catalysis, ATP synthesis in the catalytic domain of F(1) is coupled via a rotary mechanism of the central stalk subunits to proton translocation.</text>
</comment>
<comment type="function">
    <text evidence="1">This protein is part of the stalk that links CF(0) to CF(1). It either transmits conformational changes from CF(0) to CF(1) or is implicated in proton conduction.</text>
</comment>
<comment type="subunit">
    <text evidence="1">F-type ATPases have 2 components, F(1) - the catalytic core - and F(0) - the membrane proton channel. F(1) has five subunits: alpha(3), beta(3), gamma(1), delta(1), epsilon(1). F(0) has three main subunits: a(1), b(2) and c(10-14). The alpha and beta chains form an alternating ring which encloses part of the gamma chain. F(1) is attached to F(0) by a central stalk formed by the gamma and epsilon chains, while a peripheral stalk is formed by the delta and b chains.</text>
</comment>
<comment type="subcellular location">
    <subcellularLocation>
        <location evidence="1">Cell inner membrane</location>
        <topology evidence="1">Peripheral membrane protein</topology>
    </subcellularLocation>
</comment>
<comment type="similarity">
    <text evidence="1">Belongs to the ATPase delta chain family.</text>
</comment>
<organism>
    <name type="scientific">Alcanivorax borkumensis (strain ATCC 700651 / DSM 11573 / NCIMB 13689 / SK2)</name>
    <dbReference type="NCBI Taxonomy" id="393595"/>
    <lineage>
        <taxon>Bacteria</taxon>
        <taxon>Pseudomonadati</taxon>
        <taxon>Pseudomonadota</taxon>
        <taxon>Gammaproteobacteria</taxon>
        <taxon>Oceanospirillales</taxon>
        <taxon>Alcanivoracaceae</taxon>
        <taxon>Alcanivorax</taxon>
    </lineage>
</organism>
<keyword id="KW-0066">ATP synthesis</keyword>
<keyword id="KW-0997">Cell inner membrane</keyword>
<keyword id="KW-1003">Cell membrane</keyword>
<keyword id="KW-0139">CF(1)</keyword>
<keyword id="KW-0375">Hydrogen ion transport</keyword>
<keyword id="KW-0406">Ion transport</keyword>
<keyword id="KW-0472">Membrane</keyword>
<keyword id="KW-1185">Reference proteome</keyword>
<keyword id="KW-0813">Transport</keyword>
<proteinExistence type="inferred from homology"/>
<dbReference type="EMBL" id="AM286690">
    <property type="protein sequence ID" value="CAL18177.1"/>
    <property type="molecule type" value="Genomic_DNA"/>
</dbReference>
<dbReference type="RefSeq" id="WP_011590000.1">
    <property type="nucleotide sequence ID" value="NC_008260.1"/>
</dbReference>
<dbReference type="SMR" id="Q0VKX1"/>
<dbReference type="STRING" id="393595.ABO_2729"/>
<dbReference type="KEGG" id="abo:ABO_2729"/>
<dbReference type="eggNOG" id="COG0712">
    <property type="taxonomic scope" value="Bacteria"/>
</dbReference>
<dbReference type="HOGENOM" id="CLU_085114_3_0_6"/>
<dbReference type="OrthoDB" id="9816221at2"/>
<dbReference type="Proteomes" id="UP000008871">
    <property type="component" value="Chromosome"/>
</dbReference>
<dbReference type="GO" id="GO:0005886">
    <property type="term" value="C:plasma membrane"/>
    <property type="evidence" value="ECO:0007669"/>
    <property type="project" value="UniProtKB-SubCell"/>
</dbReference>
<dbReference type="GO" id="GO:0045259">
    <property type="term" value="C:proton-transporting ATP synthase complex"/>
    <property type="evidence" value="ECO:0007669"/>
    <property type="project" value="UniProtKB-KW"/>
</dbReference>
<dbReference type="GO" id="GO:0046933">
    <property type="term" value="F:proton-transporting ATP synthase activity, rotational mechanism"/>
    <property type="evidence" value="ECO:0007669"/>
    <property type="project" value="UniProtKB-UniRule"/>
</dbReference>
<dbReference type="Gene3D" id="1.10.520.20">
    <property type="entry name" value="N-terminal domain of the delta subunit of the F1F0-ATP synthase"/>
    <property type="match status" value="1"/>
</dbReference>
<dbReference type="HAMAP" id="MF_01416">
    <property type="entry name" value="ATP_synth_delta_bact"/>
    <property type="match status" value="1"/>
</dbReference>
<dbReference type="InterPro" id="IPR026015">
    <property type="entry name" value="ATP_synth_OSCP/delta_N_sf"/>
</dbReference>
<dbReference type="InterPro" id="IPR020781">
    <property type="entry name" value="ATPase_OSCP/d_CS"/>
</dbReference>
<dbReference type="InterPro" id="IPR000711">
    <property type="entry name" value="ATPase_OSCP/dsu"/>
</dbReference>
<dbReference type="NCBIfam" id="TIGR01145">
    <property type="entry name" value="ATP_synt_delta"/>
    <property type="match status" value="1"/>
</dbReference>
<dbReference type="NCBIfam" id="NF004402">
    <property type="entry name" value="PRK05758.2-2"/>
    <property type="match status" value="1"/>
</dbReference>
<dbReference type="PANTHER" id="PTHR11910">
    <property type="entry name" value="ATP SYNTHASE DELTA CHAIN"/>
    <property type="match status" value="1"/>
</dbReference>
<dbReference type="Pfam" id="PF00213">
    <property type="entry name" value="OSCP"/>
    <property type="match status" value="1"/>
</dbReference>
<dbReference type="PRINTS" id="PR00125">
    <property type="entry name" value="ATPASEDELTA"/>
</dbReference>
<dbReference type="SUPFAM" id="SSF47928">
    <property type="entry name" value="N-terminal domain of the delta subunit of the F1F0-ATP synthase"/>
    <property type="match status" value="1"/>
</dbReference>
<dbReference type="PROSITE" id="PS00389">
    <property type="entry name" value="ATPASE_DELTA"/>
    <property type="match status" value="1"/>
</dbReference>
<name>ATPD_ALCBS</name>
<feature type="chain" id="PRO_0000370875" description="ATP synthase subunit delta">
    <location>
        <begin position="1"/>
        <end position="178"/>
    </location>
</feature>
<gene>
    <name evidence="1" type="primary">atpH</name>
    <name type="ordered locus">ABO_2729</name>
</gene>
<sequence length="178" mass="19391">MAELTTIARPYAKAAFVFAKEHDALEQWEKMLGLAAAVAGDASMRAYLDQPELDDATKVSAFAEVCGDELDESGRNFVAQLTQNKRLPLLPIILQLFHELLAEQQQFTDVEMISAFELDDAATDKLVAALKKRLGTEVNVTTSVDQSLIGGVLVRAGDTVIDGSVRGRLNRLAEQLNS</sequence>
<evidence type="ECO:0000255" key="1">
    <source>
        <dbReference type="HAMAP-Rule" id="MF_01416"/>
    </source>
</evidence>
<reference key="1">
    <citation type="journal article" date="2006" name="Nat. Biotechnol.">
        <title>Genome sequence of the ubiquitous hydrocarbon-degrading marine bacterium Alcanivorax borkumensis.</title>
        <authorList>
            <person name="Schneiker S."/>
            <person name="Martins dos Santos V.A.P."/>
            <person name="Bartels D."/>
            <person name="Bekel T."/>
            <person name="Brecht M."/>
            <person name="Buhrmester J."/>
            <person name="Chernikova T.N."/>
            <person name="Denaro R."/>
            <person name="Ferrer M."/>
            <person name="Gertler C."/>
            <person name="Goesmann A."/>
            <person name="Golyshina O.V."/>
            <person name="Kaminski F."/>
            <person name="Khachane A.N."/>
            <person name="Lang S."/>
            <person name="Linke B."/>
            <person name="McHardy A.C."/>
            <person name="Meyer F."/>
            <person name="Nechitaylo T."/>
            <person name="Puehler A."/>
            <person name="Regenhardt D."/>
            <person name="Rupp O."/>
            <person name="Sabirova J.S."/>
            <person name="Selbitschka W."/>
            <person name="Yakimov M.M."/>
            <person name="Timmis K.N."/>
            <person name="Vorhoelter F.-J."/>
            <person name="Weidner S."/>
            <person name="Kaiser O."/>
            <person name="Golyshin P.N."/>
        </authorList>
    </citation>
    <scope>NUCLEOTIDE SEQUENCE [LARGE SCALE GENOMIC DNA]</scope>
    <source>
        <strain>ATCC 700651 / DSM 11573 / NCIMB 13689 / SK2</strain>
    </source>
</reference>
<protein>
    <recommendedName>
        <fullName evidence="1">ATP synthase subunit delta</fullName>
    </recommendedName>
    <alternativeName>
        <fullName evidence="1">ATP synthase F(1) sector subunit delta</fullName>
    </alternativeName>
    <alternativeName>
        <fullName evidence="1">F-type ATPase subunit delta</fullName>
        <shortName evidence="1">F-ATPase subunit delta</shortName>
    </alternativeName>
</protein>
<accession>Q0VKX1</accession>